<organism>
    <name type="scientific">Rattus norvegicus</name>
    <name type="common">Rat</name>
    <dbReference type="NCBI Taxonomy" id="10116"/>
    <lineage>
        <taxon>Eukaryota</taxon>
        <taxon>Metazoa</taxon>
        <taxon>Chordata</taxon>
        <taxon>Craniata</taxon>
        <taxon>Vertebrata</taxon>
        <taxon>Euteleostomi</taxon>
        <taxon>Mammalia</taxon>
        <taxon>Eutheria</taxon>
        <taxon>Euarchontoglires</taxon>
        <taxon>Glires</taxon>
        <taxon>Rodentia</taxon>
        <taxon>Myomorpha</taxon>
        <taxon>Muroidea</taxon>
        <taxon>Muridae</taxon>
        <taxon>Murinae</taxon>
        <taxon>Rattus</taxon>
    </lineage>
</organism>
<keyword id="KW-0007">Acetylation</keyword>
<keyword id="KW-0963">Cytoplasm</keyword>
<keyword id="KW-0507">mRNA processing</keyword>
<keyword id="KW-0508">mRNA splicing</keyword>
<keyword id="KW-0509">mRNA transport</keyword>
<keyword id="KW-0866">Nonsense-mediated mRNA decay</keyword>
<keyword id="KW-0539">Nucleus</keyword>
<keyword id="KW-1185">Reference proteome</keyword>
<keyword id="KW-0694">RNA-binding</keyword>
<keyword id="KW-0747">Spliceosome</keyword>
<keyword id="KW-0810">Translation regulation</keyword>
<keyword id="KW-0813">Transport</keyword>
<comment type="function">
    <text evidence="1">Required for pre-mRNA splicing as component of the spliceosome. Plays a redundant role with MAGOHB as core component of the exon junction complex (EJC) and in the nonsense-mediated decay (NMD) pathway. The EJC is a dynamic structure consisting of core proteins and several peripheral nuclear and cytoplasmic associated factors that join the complex only transiently either during EJC assembly or during subsequent mRNA metabolism. The EJC marks the position of the exon-exon junction in the mature mRNA for the gene expression machinery and the core components remain bound to spliced mRNAs throughout all stages of mRNA metabolism thereby influencing downstream processes including nuclear mRNA export, subcellular mRNA localization, translation efficiency and nonsense-mediated mRNA decay (NMD). The MAGOH-RBM8A heterodimer inhibits the ATPase activity of EIF4A3, thereby trapping the ATP-bound EJC core onto spliced mRNA in a stable conformation. The MAGOH-RBM8A heterodimer interacts with the EJC key regulator PYM1 leading to EJC disassembly in the cytoplasm and translation enhancement of EJC-bearing spliced mRNAs by recruiting them to the ribosomal 48S pre-initiation complex. Involved in the splicing modulation of BCL2L1/Bcl-X (and probably other apoptotic genes); specifically inhibits formation of proapoptotic isoforms; the function is different from the established EJC assembly.</text>
</comment>
<comment type="subunit">
    <text evidence="1">Heterodimer with RBM8A. Core component of the mRNA splicing-dependent exon junction complex (EJC); the core complex contains CASC3, EIF4A3, MAGOH or MAGOHB, and RBM8A. Component of the ALYREF/THOC4-EJC-RNA complex; in the complex interacts with EIF4A3, RBM8A and THOC4 (via the RRM domain); these interactions are likely specific to RNA-bound EJC (By similarity). Interacts with PYM1; the interaction is direct and dissociates the EJC from spliced mRNAs. Identified in a complex composed of the EJC core, UPF3B and UPF2. The EJC core can also interact with UPF3A (in vitro). Identified in the spliceosome C complex.</text>
</comment>
<comment type="subcellular location">
    <subcellularLocation>
        <location evidence="2">Nucleus</location>
    </subcellularLocation>
    <subcellularLocation>
        <location evidence="2">Nucleus speckle</location>
    </subcellularLocation>
    <subcellularLocation>
        <location evidence="2">Cytoplasm</location>
    </subcellularLocation>
    <text evidence="1 2">Detected in granule-like structures in the dendroplasm (PubMed:16275927). Travels to the cytoplasm as part of the exon junction complex (EJC) bound to mRNA. Colocalizes with the core EJC, ALYREF/THOC4, NXF1 and UAP56 in the nucleus and nuclear speckles (By similarity).</text>
</comment>
<comment type="tissue specificity">
    <text evidence="2">Expressed in primary neurons.</text>
</comment>
<comment type="similarity">
    <text evidence="3">Belongs to the mago nashi family.</text>
</comment>
<name>MGN_RAT</name>
<reference key="1">
    <citation type="journal article" date="2005" name="Proc. Natl. Acad. Sci. U.S.A.">
        <title>RNA splicing capability of live neuronal dendrites.</title>
        <authorList>
            <person name="Glanzer J."/>
            <person name="Miyashiro K.Y."/>
            <person name="Sul J.-Y."/>
            <person name="Barrett L."/>
            <person name="Belt B."/>
            <person name="Haydon P."/>
            <person name="Eberwine J."/>
        </authorList>
    </citation>
    <scope>NUCLEOTIDE SEQUENCE [MRNA]</scope>
    <scope>SUBCELLULAR LOCATION</scope>
    <scope>TISSUE SPECIFICITY</scope>
    <source>
        <strain>Sprague-Dawley</strain>
        <tissue>Hippocampus</tissue>
    </source>
</reference>
<accession>Q27W02</accession>
<protein>
    <recommendedName>
        <fullName>Protein mago nashi homolog</fullName>
    </recommendedName>
    <alternativeName>
        <fullName>Mago-nashi-like proliferation-associated protein</fullName>
    </alternativeName>
</protein>
<proteinExistence type="evidence at transcript level"/>
<feature type="chain" id="PRO_0000378583" description="Protein mago nashi homolog">
    <location>
        <begin position="1"/>
        <end position="146"/>
    </location>
</feature>
<feature type="modified residue" description="N-acetylmethionine" evidence="1">
    <location>
        <position position="1"/>
    </location>
</feature>
<evidence type="ECO:0000250" key="1">
    <source>
        <dbReference type="UniProtKB" id="P61326"/>
    </source>
</evidence>
<evidence type="ECO:0000269" key="2">
    <source>
    </source>
</evidence>
<evidence type="ECO:0000305" key="3"/>
<dbReference type="EMBL" id="DQ359101">
    <property type="protein sequence ID" value="ABD46660.1"/>
    <property type="molecule type" value="mRNA"/>
</dbReference>
<dbReference type="RefSeq" id="NP_001094006.1">
    <property type="nucleotide sequence ID" value="NM_001100536.1"/>
</dbReference>
<dbReference type="SMR" id="Q27W02"/>
<dbReference type="FunCoup" id="Q27W02">
    <property type="interactions" value="3595"/>
</dbReference>
<dbReference type="STRING" id="10116.ENSRNOP00000017421"/>
<dbReference type="PhosphoSitePlus" id="Q27W02"/>
<dbReference type="jPOST" id="Q27W02"/>
<dbReference type="PaxDb" id="10116-ENSRNOP00000017421"/>
<dbReference type="GeneID" id="298385"/>
<dbReference type="KEGG" id="rno:298385"/>
<dbReference type="UCSC" id="RGD:1305174">
    <property type="organism name" value="rat"/>
</dbReference>
<dbReference type="AGR" id="RGD:1305174"/>
<dbReference type="CTD" id="4116"/>
<dbReference type="RGD" id="1305174">
    <property type="gene designation" value="Magoh"/>
</dbReference>
<dbReference type="VEuPathDB" id="HostDB:ENSRNOG00000012778"/>
<dbReference type="eggNOG" id="KOG3392">
    <property type="taxonomic scope" value="Eukaryota"/>
</dbReference>
<dbReference type="HOGENOM" id="CLU_109497_1_1_1"/>
<dbReference type="InParanoid" id="Q27W02"/>
<dbReference type="OrthoDB" id="9547621at2759"/>
<dbReference type="PhylomeDB" id="Q27W02"/>
<dbReference type="TreeFam" id="TF300128"/>
<dbReference type="Reactome" id="R-RNO-159236">
    <property type="pathway name" value="Transport of Mature mRNA derived from an Intron-Containing Transcript"/>
</dbReference>
<dbReference type="Reactome" id="R-RNO-72163">
    <property type="pathway name" value="mRNA Splicing - Major Pathway"/>
</dbReference>
<dbReference type="Reactome" id="R-RNO-72187">
    <property type="pathway name" value="mRNA 3'-end processing"/>
</dbReference>
<dbReference type="Reactome" id="R-RNO-73856">
    <property type="pathway name" value="RNA Polymerase II Transcription Termination"/>
</dbReference>
<dbReference type="Reactome" id="R-RNO-975957">
    <property type="pathway name" value="Nonsense Mediated Decay (NMD) enhanced by the Exon Junction Complex (EJC)"/>
</dbReference>
<dbReference type="PRO" id="PR:Q27W02"/>
<dbReference type="Proteomes" id="UP000002494">
    <property type="component" value="Chromosome 5"/>
</dbReference>
<dbReference type="Bgee" id="ENSRNOG00000012778">
    <property type="expression patterns" value="Expressed in thymus and 20 other cell types or tissues"/>
</dbReference>
<dbReference type="GO" id="GO:0071013">
    <property type="term" value="C:catalytic step 2 spliceosome"/>
    <property type="evidence" value="ECO:0000266"/>
    <property type="project" value="RGD"/>
</dbReference>
<dbReference type="GO" id="GO:0005737">
    <property type="term" value="C:cytoplasm"/>
    <property type="evidence" value="ECO:0007669"/>
    <property type="project" value="UniProtKB-SubCell"/>
</dbReference>
<dbReference type="GO" id="GO:0035145">
    <property type="term" value="C:exon-exon junction complex"/>
    <property type="evidence" value="ECO:0000266"/>
    <property type="project" value="RGD"/>
</dbReference>
<dbReference type="GO" id="GO:1990501">
    <property type="term" value="C:exon-exon junction subcomplex mago-y14"/>
    <property type="evidence" value="ECO:0000266"/>
    <property type="project" value="RGD"/>
</dbReference>
<dbReference type="GO" id="GO:0016607">
    <property type="term" value="C:nuclear speck"/>
    <property type="evidence" value="ECO:0007669"/>
    <property type="project" value="UniProtKB-SubCell"/>
</dbReference>
<dbReference type="GO" id="GO:0005634">
    <property type="term" value="C:nucleus"/>
    <property type="evidence" value="ECO:0000266"/>
    <property type="project" value="RGD"/>
</dbReference>
<dbReference type="GO" id="GO:0003723">
    <property type="term" value="F:RNA binding"/>
    <property type="evidence" value="ECO:0007669"/>
    <property type="project" value="UniProtKB-KW"/>
</dbReference>
<dbReference type="GO" id="GO:0006397">
    <property type="term" value="P:mRNA processing"/>
    <property type="evidence" value="ECO:0007669"/>
    <property type="project" value="UniProtKB-KW"/>
</dbReference>
<dbReference type="GO" id="GO:0051028">
    <property type="term" value="P:mRNA transport"/>
    <property type="evidence" value="ECO:0007669"/>
    <property type="project" value="UniProtKB-KW"/>
</dbReference>
<dbReference type="GO" id="GO:0000184">
    <property type="term" value="P:nuclear-transcribed mRNA catabolic process, nonsense-mediated decay"/>
    <property type="evidence" value="ECO:0000266"/>
    <property type="project" value="RGD"/>
</dbReference>
<dbReference type="GO" id="GO:0000381">
    <property type="term" value="P:regulation of alternative mRNA splicing, via spliceosome"/>
    <property type="evidence" value="ECO:0000250"/>
    <property type="project" value="UniProtKB"/>
</dbReference>
<dbReference type="GO" id="GO:0050684">
    <property type="term" value="P:regulation of mRNA processing"/>
    <property type="evidence" value="ECO:0000266"/>
    <property type="project" value="RGD"/>
</dbReference>
<dbReference type="GO" id="GO:2000622">
    <property type="term" value="P:regulation of nuclear-transcribed mRNA catabolic process, nonsense-mediated decay"/>
    <property type="evidence" value="ECO:0000266"/>
    <property type="project" value="RGD"/>
</dbReference>
<dbReference type="GO" id="GO:0006417">
    <property type="term" value="P:regulation of translation"/>
    <property type="evidence" value="ECO:0007669"/>
    <property type="project" value="UniProtKB-KW"/>
</dbReference>
<dbReference type="GO" id="GO:0008380">
    <property type="term" value="P:RNA splicing"/>
    <property type="evidence" value="ECO:0000318"/>
    <property type="project" value="GO_Central"/>
</dbReference>
<dbReference type="CDD" id="cd11295">
    <property type="entry name" value="Mago_nashi"/>
    <property type="match status" value="1"/>
</dbReference>
<dbReference type="FunFam" id="3.30.1560.10:FF:000001">
    <property type="entry name" value="Protein mago nashi homolog"/>
    <property type="match status" value="1"/>
</dbReference>
<dbReference type="Gene3D" id="3.30.1560.10">
    <property type="entry name" value="Mago nashi"/>
    <property type="match status" value="1"/>
</dbReference>
<dbReference type="InterPro" id="IPR004023">
    <property type="entry name" value="Mago_nashi"/>
</dbReference>
<dbReference type="InterPro" id="IPR036605">
    <property type="entry name" value="Mago_nashi_sf"/>
</dbReference>
<dbReference type="PANTHER" id="PTHR12638">
    <property type="entry name" value="PROTEIN MAGO NASHI HOMOLOG"/>
    <property type="match status" value="1"/>
</dbReference>
<dbReference type="PANTHER" id="PTHR12638:SF2">
    <property type="entry name" value="PROTEIN MAGO NASHI HOMOLOG"/>
    <property type="match status" value="1"/>
</dbReference>
<dbReference type="Pfam" id="PF02792">
    <property type="entry name" value="Mago_nashi"/>
    <property type="match status" value="1"/>
</dbReference>
<dbReference type="SUPFAM" id="SSF89817">
    <property type="entry name" value="Mago nashi protein"/>
    <property type="match status" value="1"/>
</dbReference>
<sequence length="146" mass="17164">MESDFYLRYYVGHKGKFGHEFLEFEFRPDGKLRYANNSNYKNDVMIRKEAYVHKSVMEELKRIIDDSEITKEDDALWPPPDRVGRQELEIVIGDEHISFTTSKIGSLIDVNQSKDPEGLRVFYYLVQDLKCLVFSLIGLHFKIKPI</sequence>
<gene>
    <name type="primary">Magoh</name>
</gene>